<accession>Q8LBH4</accession>
<accession>Q8RY68</accession>
<comment type="function">
    <text evidence="3 4">Plays a positive role in plant adaptation to phosphate starvation (PubMed:18315545). Inhibits PHR1 DNA-binding activity in a Pi-dependent manner (PubMed:25271326).</text>
</comment>
<comment type="subunit">
    <text evidence="4">Interacts with PHR1 in a highly Pi-dependent manner (PubMed:25271326).</text>
</comment>
<comment type="subcellular location">
    <subcellularLocation>
        <location evidence="3 4">Nucleus</location>
    </subcellularLocation>
</comment>
<comment type="induction">
    <text evidence="3">Up-regulated under phosphate starvation.</text>
</comment>
<comment type="disruption phenotype">
    <text evidence="4">No effect on Pi accumulation, due to the redundancy with SPX2. Spx1 and spx2 double mutants have an increased root-to-shoot growth ratio and a reduced rot hair size when grown in Pi-sufficient conditions.</text>
</comment>
<gene>
    <name evidence="5" type="primary">SPX1</name>
    <name evidence="7" type="ordered locus">At5g20150</name>
    <name evidence="8" type="ORF">F5O24.40</name>
</gene>
<organism>
    <name type="scientific">Arabidopsis thaliana</name>
    <name type="common">Mouse-ear cress</name>
    <dbReference type="NCBI Taxonomy" id="3702"/>
    <lineage>
        <taxon>Eukaryota</taxon>
        <taxon>Viridiplantae</taxon>
        <taxon>Streptophyta</taxon>
        <taxon>Embryophyta</taxon>
        <taxon>Tracheophyta</taxon>
        <taxon>Spermatophyta</taxon>
        <taxon>Magnoliopsida</taxon>
        <taxon>eudicotyledons</taxon>
        <taxon>Gunneridae</taxon>
        <taxon>Pentapetalae</taxon>
        <taxon>rosids</taxon>
        <taxon>malvids</taxon>
        <taxon>Brassicales</taxon>
        <taxon>Brassicaceae</taxon>
        <taxon>Camelineae</taxon>
        <taxon>Arabidopsis</taxon>
    </lineage>
</organism>
<reference key="1">
    <citation type="journal article" date="2000" name="Nature">
        <title>Sequence and analysis of chromosome 5 of the plant Arabidopsis thaliana.</title>
        <authorList>
            <person name="Tabata S."/>
            <person name="Kaneko T."/>
            <person name="Nakamura Y."/>
            <person name="Kotani H."/>
            <person name="Kato T."/>
            <person name="Asamizu E."/>
            <person name="Miyajima N."/>
            <person name="Sasamoto S."/>
            <person name="Kimura T."/>
            <person name="Hosouchi T."/>
            <person name="Kawashima K."/>
            <person name="Kohara M."/>
            <person name="Matsumoto M."/>
            <person name="Matsuno A."/>
            <person name="Muraki A."/>
            <person name="Nakayama S."/>
            <person name="Nakazaki N."/>
            <person name="Naruo K."/>
            <person name="Okumura S."/>
            <person name="Shinpo S."/>
            <person name="Takeuchi C."/>
            <person name="Wada T."/>
            <person name="Watanabe A."/>
            <person name="Yamada M."/>
            <person name="Yasuda M."/>
            <person name="Sato S."/>
            <person name="de la Bastide M."/>
            <person name="Huang E."/>
            <person name="Spiegel L."/>
            <person name="Gnoj L."/>
            <person name="O'Shaughnessy A."/>
            <person name="Preston R."/>
            <person name="Habermann K."/>
            <person name="Murray J."/>
            <person name="Johnson D."/>
            <person name="Rohlfing T."/>
            <person name="Nelson J."/>
            <person name="Stoneking T."/>
            <person name="Pepin K."/>
            <person name="Spieth J."/>
            <person name="Sekhon M."/>
            <person name="Armstrong J."/>
            <person name="Becker M."/>
            <person name="Belter E."/>
            <person name="Cordum H."/>
            <person name="Cordes M."/>
            <person name="Courtney L."/>
            <person name="Courtney W."/>
            <person name="Dante M."/>
            <person name="Du H."/>
            <person name="Edwards J."/>
            <person name="Fryman J."/>
            <person name="Haakensen B."/>
            <person name="Lamar E."/>
            <person name="Latreille P."/>
            <person name="Leonard S."/>
            <person name="Meyer R."/>
            <person name="Mulvaney E."/>
            <person name="Ozersky P."/>
            <person name="Riley A."/>
            <person name="Strowmatt C."/>
            <person name="Wagner-McPherson C."/>
            <person name="Wollam A."/>
            <person name="Yoakum M."/>
            <person name="Bell M."/>
            <person name="Dedhia N."/>
            <person name="Parnell L."/>
            <person name="Shah R."/>
            <person name="Rodriguez M."/>
            <person name="Hoon See L."/>
            <person name="Vil D."/>
            <person name="Baker J."/>
            <person name="Kirchoff K."/>
            <person name="Toth K."/>
            <person name="King L."/>
            <person name="Bahret A."/>
            <person name="Miller B."/>
            <person name="Marra M.A."/>
            <person name="Martienssen R."/>
            <person name="McCombie W.R."/>
            <person name="Wilson R.K."/>
            <person name="Murphy G."/>
            <person name="Bancroft I."/>
            <person name="Volckaert G."/>
            <person name="Wambutt R."/>
            <person name="Duesterhoeft A."/>
            <person name="Stiekema W."/>
            <person name="Pohl T."/>
            <person name="Entian K.-D."/>
            <person name="Terryn N."/>
            <person name="Hartley N."/>
            <person name="Bent E."/>
            <person name="Johnson S."/>
            <person name="Langham S.-A."/>
            <person name="McCullagh B."/>
            <person name="Robben J."/>
            <person name="Grymonprez B."/>
            <person name="Zimmermann W."/>
            <person name="Ramsperger U."/>
            <person name="Wedler H."/>
            <person name="Balke K."/>
            <person name="Wedler E."/>
            <person name="Peters S."/>
            <person name="van Staveren M."/>
            <person name="Dirkse W."/>
            <person name="Mooijman P."/>
            <person name="Klein Lankhorst R."/>
            <person name="Weitzenegger T."/>
            <person name="Bothe G."/>
            <person name="Rose M."/>
            <person name="Hauf J."/>
            <person name="Berneiser S."/>
            <person name="Hempel S."/>
            <person name="Feldpausch M."/>
            <person name="Lamberth S."/>
            <person name="Villarroel R."/>
            <person name="Gielen J."/>
            <person name="Ardiles W."/>
            <person name="Bents O."/>
            <person name="Lemcke K."/>
            <person name="Kolesov G."/>
            <person name="Mayer K.F.X."/>
            <person name="Rudd S."/>
            <person name="Schoof H."/>
            <person name="Schueller C."/>
            <person name="Zaccaria P."/>
            <person name="Mewes H.-W."/>
            <person name="Bevan M."/>
            <person name="Fransz P.F."/>
        </authorList>
    </citation>
    <scope>NUCLEOTIDE SEQUENCE [LARGE SCALE GENOMIC DNA]</scope>
    <source>
        <strain>cv. Columbia</strain>
    </source>
</reference>
<reference key="2">
    <citation type="journal article" date="2017" name="Plant J.">
        <title>Araport11: a complete reannotation of the Arabidopsis thaliana reference genome.</title>
        <authorList>
            <person name="Cheng C.Y."/>
            <person name="Krishnakumar V."/>
            <person name="Chan A.P."/>
            <person name="Thibaud-Nissen F."/>
            <person name="Schobel S."/>
            <person name="Town C.D."/>
        </authorList>
    </citation>
    <scope>GENOME REANNOTATION</scope>
    <source>
        <strain>cv. Columbia</strain>
    </source>
</reference>
<reference key="3">
    <citation type="journal article" date="2003" name="Science">
        <title>Empirical analysis of transcriptional activity in the Arabidopsis genome.</title>
        <authorList>
            <person name="Yamada K."/>
            <person name="Lim J."/>
            <person name="Dale J.M."/>
            <person name="Chen H."/>
            <person name="Shinn P."/>
            <person name="Palm C.J."/>
            <person name="Southwick A.M."/>
            <person name="Wu H.C."/>
            <person name="Kim C.J."/>
            <person name="Nguyen M."/>
            <person name="Pham P.K."/>
            <person name="Cheuk R.F."/>
            <person name="Karlin-Newmann G."/>
            <person name="Liu S.X."/>
            <person name="Lam B."/>
            <person name="Sakano H."/>
            <person name="Wu T."/>
            <person name="Yu G."/>
            <person name="Miranda M."/>
            <person name="Quach H.L."/>
            <person name="Tripp M."/>
            <person name="Chang C.H."/>
            <person name="Lee J.M."/>
            <person name="Toriumi M.J."/>
            <person name="Chan M.M."/>
            <person name="Tang C.C."/>
            <person name="Onodera C.S."/>
            <person name="Deng J.M."/>
            <person name="Akiyama K."/>
            <person name="Ansari Y."/>
            <person name="Arakawa T."/>
            <person name="Banh J."/>
            <person name="Banno F."/>
            <person name="Bowser L."/>
            <person name="Brooks S.Y."/>
            <person name="Carninci P."/>
            <person name="Chao Q."/>
            <person name="Choy N."/>
            <person name="Enju A."/>
            <person name="Goldsmith A.D."/>
            <person name="Gurjal M."/>
            <person name="Hansen N.F."/>
            <person name="Hayashizaki Y."/>
            <person name="Johnson-Hopson C."/>
            <person name="Hsuan V.W."/>
            <person name="Iida K."/>
            <person name="Karnes M."/>
            <person name="Khan S."/>
            <person name="Koesema E."/>
            <person name="Ishida J."/>
            <person name="Jiang P.X."/>
            <person name="Jones T."/>
            <person name="Kawai J."/>
            <person name="Kamiya A."/>
            <person name="Meyers C."/>
            <person name="Nakajima M."/>
            <person name="Narusaka M."/>
            <person name="Seki M."/>
            <person name="Sakurai T."/>
            <person name="Satou M."/>
            <person name="Tamse R."/>
            <person name="Vaysberg M."/>
            <person name="Wallender E.K."/>
            <person name="Wong C."/>
            <person name="Yamamura Y."/>
            <person name="Yuan S."/>
            <person name="Shinozaki K."/>
            <person name="Davis R.W."/>
            <person name="Theologis A."/>
            <person name="Ecker J.R."/>
        </authorList>
    </citation>
    <scope>NUCLEOTIDE SEQUENCE [LARGE SCALE MRNA]</scope>
    <source>
        <strain>cv. Columbia</strain>
    </source>
</reference>
<reference key="4">
    <citation type="submission" date="2002-03" db="EMBL/GenBank/DDBJ databases">
        <title>Full-length cDNA from Arabidopsis thaliana.</title>
        <authorList>
            <person name="Brover V.V."/>
            <person name="Troukhan M.E."/>
            <person name="Alexandrov N.A."/>
            <person name="Lu Y.-P."/>
            <person name="Flavell R.B."/>
            <person name="Feldmann K.A."/>
        </authorList>
    </citation>
    <scope>NUCLEOTIDE SEQUENCE [LARGE SCALE MRNA]</scope>
</reference>
<reference key="5">
    <citation type="journal article" date="2008" name="Plant J.">
        <title>Characterization of a sub-family of Arabidopsis genes with the SPX domain reveals their diverse functions in plant tolerance to phosphorus starvation.</title>
        <authorList>
            <person name="Duan K."/>
            <person name="Yi K."/>
            <person name="Dang L."/>
            <person name="Huang H."/>
            <person name="Wu W."/>
            <person name="Wu P."/>
        </authorList>
    </citation>
    <scope>GENE FAMILY</scope>
    <scope>SUBCELLULAR LOCATION</scope>
    <scope>INDUCTION</scope>
    <scope>FUNCTION</scope>
</reference>
<reference key="6">
    <citation type="journal article" date="2014" name="Proc. Natl. Acad. Sci. U.S.A.">
        <title>SPX1 is a phosphate-dependent inhibitor of PHOSPHATE STARVATION RESPONSE 1 in Arabidopsis.</title>
        <authorList>
            <person name="Puga M.I."/>
            <person name="Mateos I."/>
            <person name="Charukesi R."/>
            <person name="Wang Z."/>
            <person name="Franco-Zorrilla J.M."/>
            <person name="de Lorenzo L."/>
            <person name="Irigoyen M.L."/>
            <person name="Masiero S."/>
            <person name="Bustos R."/>
            <person name="Rodriguez J."/>
            <person name="Leyva A."/>
            <person name="Rubio V."/>
            <person name="Sommer H."/>
            <person name="Paz-Ares J."/>
        </authorList>
    </citation>
    <scope>FUNCTION</scope>
    <scope>INTERACTION WITH PHR1</scope>
    <scope>DISRUPTION PHENOTYPE</scope>
    <scope>SUBCELLULAR LOCATION</scope>
</reference>
<protein>
    <recommendedName>
        <fullName evidence="5">SPX domain-containing protein 1</fullName>
    </recommendedName>
    <alternativeName>
        <fullName evidence="5">Protein SPX DOMAIN GENE 1</fullName>
        <shortName evidence="5">AtSPX1</shortName>
    </alternativeName>
</protein>
<sequence length="256" mass="30073">MKFGKSLSNQIEQTLPEWQDKFLSYKELKKRLKLIGSKTADRPVKRLRLDEFSVGISKEEINFIQLLEDELEKFNNFFVEKEEEYIIRLKEFRDRIAKAKDSMEKMIKIRKEIVDFHGEMVLLENYSALNYTGLVKILKKYDKRTGDLMRLPFIQKVLQQPFYTTDLLFKLVKESEAMLDQIFPANETESEIIQAELSEHKFMESLHMKSTIAALRVLKEIRSGSSTVSVFSLPPLQLNGLDETWKKIPLLEQEAK</sequence>
<evidence type="ECO:0000255" key="1"/>
<evidence type="ECO:0000255" key="2">
    <source>
        <dbReference type="PROSITE-ProRule" id="PRU00714"/>
    </source>
</evidence>
<evidence type="ECO:0000269" key="3">
    <source>
    </source>
</evidence>
<evidence type="ECO:0000269" key="4">
    <source>
    </source>
</evidence>
<evidence type="ECO:0000303" key="5">
    <source>
    </source>
</evidence>
<evidence type="ECO:0000305" key="6"/>
<evidence type="ECO:0000312" key="7">
    <source>
        <dbReference type="Araport" id="AT5G20150"/>
    </source>
</evidence>
<evidence type="ECO:0000312" key="8">
    <source>
        <dbReference type="EMBL" id="AF296825"/>
    </source>
</evidence>
<keyword id="KW-0539">Nucleus</keyword>
<keyword id="KW-1185">Reference proteome</keyword>
<proteinExistence type="evidence at protein level"/>
<feature type="chain" id="PRO_0000398342" description="SPX domain-containing protein 1">
    <location>
        <begin position="1"/>
        <end position="256"/>
    </location>
</feature>
<feature type="domain" description="SPX" evidence="2">
    <location>
        <begin position="1"/>
        <end position="155"/>
    </location>
</feature>
<feature type="short sequence motif" description="Bipartite nuclear localization signal" evidence="1">
    <location>
        <begin position="30"/>
        <end position="46"/>
    </location>
</feature>
<feature type="sequence conflict" description="In Ref. 4; AAM64762." evidence="6" ref="4">
    <original>N</original>
    <variation>D</variation>
    <location>
        <position position="62"/>
    </location>
</feature>
<name>SPX1_ARATH</name>
<dbReference type="EMBL" id="AF296825">
    <property type="status" value="NOT_ANNOTATED_CDS"/>
    <property type="molecule type" value="Genomic_DNA"/>
</dbReference>
<dbReference type="EMBL" id="CP002688">
    <property type="protein sequence ID" value="AED92801.1"/>
    <property type="molecule type" value="Genomic_DNA"/>
</dbReference>
<dbReference type="EMBL" id="AY075605">
    <property type="protein sequence ID" value="AAL91621.1"/>
    <property type="molecule type" value="mRNA"/>
</dbReference>
<dbReference type="EMBL" id="BT000868">
    <property type="protein sequence ID" value="AAN38706.1"/>
    <property type="molecule type" value="mRNA"/>
</dbReference>
<dbReference type="EMBL" id="AY087206">
    <property type="protein sequence ID" value="AAM64762.1"/>
    <property type="molecule type" value="mRNA"/>
</dbReference>
<dbReference type="RefSeq" id="NP_197515.1">
    <property type="nucleotide sequence ID" value="NM_122022.3"/>
</dbReference>
<dbReference type="SMR" id="Q8LBH4"/>
<dbReference type="BioGRID" id="17413">
    <property type="interactions" value="8"/>
</dbReference>
<dbReference type="IntAct" id="Q8LBH4">
    <property type="interactions" value="2"/>
</dbReference>
<dbReference type="STRING" id="3702.Q8LBH4"/>
<dbReference type="PaxDb" id="3702-AT5G20150.1"/>
<dbReference type="ProteomicsDB" id="245250"/>
<dbReference type="DNASU" id="832137"/>
<dbReference type="EnsemblPlants" id="AT5G20150.1">
    <property type="protein sequence ID" value="AT5G20150.1"/>
    <property type="gene ID" value="AT5G20150"/>
</dbReference>
<dbReference type="GeneID" id="832137"/>
<dbReference type="Gramene" id="AT5G20150.1">
    <property type="protein sequence ID" value="AT5G20150.1"/>
    <property type="gene ID" value="AT5G20150"/>
</dbReference>
<dbReference type="KEGG" id="ath:AT5G20150"/>
<dbReference type="Araport" id="AT5G20150"/>
<dbReference type="TAIR" id="AT5G20150">
    <property type="gene designation" value="SPX1"/>
</dbReference>
<dbReference type="eggNOG" id="KOG1161">
    <property type="taxonomic scope" value="Eukaryota"/>
</dbReference>
<dbReference type="HOGENOM" id="CLU_057600_1_1_1"/>
<dbReference type="InParanoid" id="Q8LBH4"/>
<dbReference type="OMA" id="CATPRDI"/>
<dbReference type="PRO" id="PR:Q8LBH4"/>
<dbReference type="Proteomes" id="UP000006548">
    <property type="component" value="Chromosome 5"/>
</dbReference>
<dbReference type="ExpressionAtlas" id="Q8LBH4">
    <property type="expression patterns" value="baseline and differential"/>
</dbReference>
<dbReference type="GO" id="GO:0005634">
    <property type="term" value="C:nucleus"/>
    <property type="evidence" value="ECO:0000314"/>
    <property type="project" value="TAIR"/>
</dbReference>
<dbReference type="GO" id="GO:0071456">
    <property type="term" value="P:cellular response to hypoxia"/>
    <property type="evidence" value="ECO:0007007"/>
    <property type="project" value="TAIR"/>
</dbReference>
<dbReference type="GO" id="GO:0016036">
    <property type="term" value="P:cellular response to phosphate starvation"/>
    <property type="evidence" value="ECO:0000270"/>
    <property type="project" value="TAIR"/>
</dbReference>
<dbReference type="GO" id="GO:0080040">
    <property type="term" value="P:positive regulation of cellular response to phosphate starvation"/>
    <property type="evidence" value="ECO:0000315"/>
    <property type="project" value="TAIR"/>
</dbReference>
<dbReference type="CDD" id="cd14481">
    <property type="entry name" value="SPX_AtSPX1_like"/>
    <property type="match status" value="1"/>
</dbReference>
<dbReference type="InterPro" id="IPR004331">
    <property type="entry name" value="SPX_dom"/>
</dbReference>
<dbReference type="InterPro" id="IPR031142">
    <property type="entry name" value="SPX_prot"/>
</dbReference>
<dbReference type="PANTHER" id="PTHR45978:SF10">
    <property type="entry name" value="SPX DOMAIN-CONTAINING PROTEIN 1"/>
    <property type="match status" value="1"/>
</dbReference>
<dbReference type="PANTHER" id="PTHR45978">
    <property type="entry name" value="SPX DOMAIN-CONTAINING PROTEIN 3"/>
    <property type="match status" value="1"/>
</dbReference>
<dbReference type="Pfam" id="PF03105">
    <property type="entry name" value="SPX"/>
    <property type="match status" value="2"/>
</dbReference>
<dbReference type="PROSITE" id="PS51382">
    <property type="entry name" value="SPX"/>
    <property type="match status" value="1"/>
</dbReference>